<sequence>MIYGIGTDIVAVARLRGMWERHGDRVLDKLLTPQEIADFSKAADKGRFLAKRFAAKEAFSKALGTGVRPPATLPAIAVTHDDLGKPILECYGQLAEVLKNKNLRAHLSISDEAEYAVAYVILEHA</sequence>
<feature type="chain" id="PRO_0000228281" description="Holo-[acyl-carrier-protein] synthase">
    <location>
        <begin position="1"/>
        <end position="125"/>
    </location>
</feature>
<feature type="binding site" evidence="1">
    <location>
        <position position="8"/>
    </location>
    <ligand>
        <name>Mg(2+)</name>
        <dbReference type="ChEBI" id="CHEBI:18420"/>
    </ligand>
</feature>
<feature type="binding site" evidence="1">
    <location>
        <position position="57"/>
    </location>
    <ligand>
        <name>Mg(2+)</name>
        <dbReference type="ChEBI" id="CHEBI:18420"/>
    </ligand>
</feature>
<protein>
    <recommendedName>
        <fullName evidence="1">Holo-[acyl-carrier-protein] synthase</fullName>
        <shortName evidence="1">Holo-ACP synthase</shortName>
        <ecNumber evidence="1">2.7.8.7</ecNumber>
    </recommendedName>
    <alternativeName>
        <fullName evidence="1">4'-phosphopantetheinyl transferase AcpS</fullName>
    </alternativeName>
</protein>
<comment type="function">
    <text evidence="1">Transfers the 4'-phosphopantetheine moiety from coenzyme A to a Ser of acyl-carrier-protein.</text>
</comment>
<comment type="catalytic activity">
    <reaction evidence="1">
        <text>apo-[ACP] + CoA = holo-[ACP] + adenosine 3',5'-bisphosphate + H(+)</text>
        <dbReference type="Rhea" id="RHEA:12068"/>
        <dbReference type="Rhea" id="RHEA-COMP:9685"/>
        <dbReference type="Rhea" id="RHEA-COMP:9690"/>
        <dbReference type="ChEBI" id="CHEBI:15378"/>
        <dbReference type="ChEBI" id="CHEBI:29999"/>
        <dbReference type="ChEBI" id="CHEBI:57287"/>
        <dbReference type="ChEBI" id="CHEBI:58343"/>
        <dbReference type="ChEBI" id="CHEBI:64479"/>
        <dbReference type="EC" id="2.7.8.7"/>
    </reaction>
</comment>
<comment type="cofactor">
    <cofactor evidence="1">
        <name>Mg(2+)</name>
        <dbReference type="ChEBI" id="CHEBI:18420"/>
    </cofactor>
</comment>
<comment type="subcellular location">
    <subcellularLocation>
        <location evidence="1">Cytoplasm</location>
    </subcellularLocation>
</comment>
<comment type="similarity">
    <text evidence="1">Belongs to the P-Pant transferase superfamily. AcpS family.</text>
</comment>
<proteinExistence type="inferred from homology"/>
<accession>Q47EF3</accession>
<name>ACPS_DECAR</name>
<dbReference type="EC" id="2.7.8.7" evidence="1"/>
<dbReference type="EMBL" id="CP000089">
    <property type="protein sequence ID" value="AAZ46778.1"/>
    <property type="molecule type" value="Genomic_DNA"/>
</dbReference>
<dbReference type="SMR" id="Q47EF3"/>
<dbReference type="STRING" id="159087.Daro_2033"/>
<dbReference type="KEGG" id="dar:Daro_2033"/>
<dbReference type="eggNOG" id="COG0736">
    <property type="taxonomic scope" value="Bacteria"/>
</dbReference>
<dbReference type="HOGENOM" id="CLU_089696_3_1_4"/>
<dbReference type="OrthoDB" id="517356at2"/>
<dbReference type="GO" id="GO:0005737">
    <property type="term" value="C:cytoplasm"/>
    <property type="evidence" value="ECO:0007669"/>
    <property type="project" value="UniProtKB-SubCell"/>
</dbReference>
<dbReference type="GO" id="GO:0008897">
    <property type="term" value="F:holo-[acyl-carrier-protein] synthase activity"/>
    <property type="evidence" value="ECO:0007669"/>
    <property type="project" value="UniProtKB-UniRule"/>
</dbReference>
<dbReference type="GO" id="GO:0000287">
    <property type="term" value="F:magnesium ion binding"/>
    <property type="evidence" value="ECO:0007669"/>
    <property type="project" value="UniProtKB-UniRule"/>
</dbReference>
<dbReference type="GO" id="GO:0006633">
    <property type="term" value="P:fatty acid biosynthetic process"/>
    <property type="evidence" value="ECO:0007669"/>
    <property type="project" value="UniProtKB-UniRule"/>
</dbReference>
<dbReference type="Gene3D" id="3.90.470.20">
    <property type="entry name" value="4'-phosphopantetheinyl transferase domain"/>
    <property type="match status" value="1"/>
</dbReference>
<dbReference type="HAMAP" id="MF_00101">
    <property type="entry name" value="AcpS"/>
    <property type="match status" value="1"/>
</dbReference>
<dbReference type="InterPro" id="IPR008278">
    <property type="entry name" value="4-PPantetheinyl_Trfase_dom"/>
</dbReference>
<dbReference type="InterPro" id="IPR037143">
    <property type="entry name" value="4-PPantetheinyl_Trfase_dom_sf"/>
</dbReference>
<dbReference type="InterPro" id="IPR002582">
    <property type="entry name" value="ACPS"/>
</dbReference>
<dbReference type="InterPro" id="IPR004568">
    <property type="entry name" value="Ppantetheine-prot_Trfase_dom"/>
</dbReference>
<dbReference type="NCBIfam" id="TIGR00516">
    <property type="entry name" value="acpS"/>
    <property type="match status" value="1"/>
</dbReference>
<dbReference type="NCBIfam" id="TIGR00556">
    <property type="entry name" value="pantethn_trn"/>
    <property type="match status" value="1"/>
</dbReference>
<dbReference type="Pfam" id="PF01648">
    <property type="entry name" value="ACPS"/>
    <property type="match status" value="1"/>
</dbReference>
<dbReference type="SUPFAM" id="SSF56214">
    <property type="entry name" value="4'-phosphopantetheinyl transferase"/>
    <property type="match status" value="1"/>
</dbReference>
<organism>
    <name type="scientific">Dechloromonas aromatica (strain RCB)</name>
    <dbReference type="NCBI Taxonomy" id="159087"/>
    <lineage>
        <taxon>Bacteria</taxon>
        <taxon>Pseudomonadati</taxon>
        <taxon>Pseudomonadota</taxon>
        <taxon>Betaproteobacteria</taxon>
        <taxon>Rhodocyclales</taxon>
        <taxon>Azonexaceae</taxon>
        <taxon>Dechloromonas</taxon>
    </lineage>
</organism>
<reference key="1">
    <citation type="journal article" date="2009" name="BMC Genomics">
        <title>Metabolic analysis of the soil microbe Dechloromonas aromatica str. RCB: indications of a surprisingly complex life-style and cryptic anaerobic pathways for aromatic degradation.</title>
        <authorList>
            <person name="Salinero K.K."/>
            <person name="Keller K."/>
            <person name="Feil W.S."/>
            <person name="Feil H."/>
            <person name="Trong S."/>
            <person name="Di Bartolo G."/>
            <person name="Lapidus A."/>
        </authorList>
    </citation>
    <scope>NUCLEOTIDE SEQUENCE [LARGE SCALE GENOMIC DNA]</scope>
    <source>
        <strain>RCB</strain>
    </source>
</reference>
<gene>
    <name evidence="1" type="primary">acpS</name>
    <name type="ordered locus">Daro_2033</name>
</gene>
<keyword id="KW-0963">Cytoplasm</keyword>
<keyword id="KW-0275">Fatty acid biosynthesis</keyword>
<keyword id="KW-0276">Fatty acid metabolism</keyword>
<keyword id="KW-0444">Lipid biosynthesis</keyword>
<keyword id="KW-0443">Lipid metabolism</keyword>
<keyword id="KW-0460">Magnesium</keyword>
<keyword id="KW-0479">Metal-binding</keyword>
<keyword id="KW-0808">Transferase</keyword>
<evidence type="ECO:0000255" key="1">
    <source>
        <dbReference type="HAMAP-Rule" id="MF_00101"/>
    </source>
</evidence>